<keyword id="KW-0884">PQQ biosynthesis</keyword>
<keyword id="KW-0813">Transport</keyword>
<name>PQQB_ACIBC</name>
<sequence>MHIYILGSAAGGGFPQWNCNCPNCHGVRTGTINAKVRTQSSIAISENGVDWILLNASPDIRQQLFDFKAAQPARKLRDTGITNVILMDSQLDHTTGLLTLREGCPMNVWCTEMVYQDLTTGFPVFNMLKHWNGGLQYHQIDPKQAFKINGFENLEFLPLIIQSAAPPYSPHRHDPHEGDNIALIIKDHKTQKQLFYAPGLGKIDDQIMQIMQDSDCVMIDGTLWTDDEMQQTGVGKKTGREMGHLYISGEGGSLSYLNQLSTPKKVLIHINNTNPILNENSAQFAELKANGVEVAFDGMQIEL</sequence>
<proteinExistence type="inferred from homology"/>
<dbReference type="EMBL" id="CP000863">
    <property type="protein sequence ID" value="ACC57107.1"/>
    <property type="molecule type" value="Genomic_DNA"/>
</dbReference>
<dbReference type="RefSeq" id="WP_000548482.1">
    <property type="nucleotide sequence ID" value="NZ_CP031380.1"/>
</dbReference>
<dbReference type="SMR" id="B2I0I2"/>
<dbReference type="KEGG" id="abc:ACICU_01795"/>
<dbReference type="HOGENOM" id="CLU_061120_0_0_6"/>
<dbReference type="UniPathway" id="UPA00539"/>
<dbReference type="Proteomes" id="UP000008839">
    <property type="component" value="Chromosome"/>
</dbReference>
<dbReference type="GO" id="GO:0018189">
    <property type="term" value="P:pyrroloquinoline quinone biosynthetic process"/>
    <property type="evidence" value="ECO:0007669"/>
    <property type="project" value="UniProtKB-UniRule"/>
</dbReference>
<dbReference type="CDD" id="cd16274">
    <property type="entry name" value="PQQB-like_MBL-fold"/>
    <property type="match status" value="1"/>
</dbReference>
<dbReference type="Gene3D" id="3.60.15.10">
    <property type="entry name" value="Ribonuclease Z/Hydroxyacylglutathione hydrolase-like"/>
    <property type="match status" value="1"/>
</dbReference>
<dbReference type="HAMAP" id="MF_00653">
    <property type="entry name" value="PQQ_syn_PqqB"/>
    <property type="match status" value="1"/>
</dbReference>
<dbReference type="InterPro" id="IPR001279">
    <property type="entry name" value="Metallo-B-lactamas"/>
</dbReference>
<dbReference type="InterPro" id="IPR011842">
    <property type="entry name" value="PQQ_synth_PqqB"/>
</dbReference>
<dbReference type="InterPro" id="IPR036866">
    <property type="entry name" value="RibonucZ/Hydroxyglut_hydro"/>
</dbReference>
<dbReference type="NCBIfam" id="TIGR02108">
    <property type="entry name" value="PQQ_syn_pqqB"/>
    <property type="match status" value="1"/>
</dbReference>
<dbReference type="PANTHER" id="PTHR42663:SF7">
    <property type="entry name" value="COENZYME PQQ SYNTHESIS PROTEIN B"/>
    <property type="match status" value="1"/>
</dbReference>
<dbReference type="PANTHER" id="PTHR42663">
    <property type="entry name" value="HYDROLASE C777.06C-RELATED-RELATED"/>
    <property type="match status" value="1"/>
</dbReference>
<dbReference type="Pfam" id="PF12706">
    <property type="entry name" value="Lactamase_B_2"/>
    <property type="match status" value="1"/>
</dbReference>
<dbReference type="SUPFAM" id="SSF56281">
    <property type="entry name" value="Metallo-hydrolase/oxidoreductase"/>
    <property type="match status" value="1"/>
</dbReference>
<organism>
    <name type="scientific">Acinetobacter baumannii (strain ACICU)</name>
    <dbReference type="NCBI Taxonomy" id="405416"/>
    <lineage>
        <taxon>Bacteria</taxon>
        <taxon>Pseudomonadati</taxon>
        <taxon>Pseudomonadota</taxon>
        <taxon>Gammaproteobacteria</taxon>
        <taxon>Moraxellales</taxon>
        <taxon>Moraxellaceae</taxon>
        <taxon>Acinetobacter</taxon>
        <taxon>Acinetobacter calcoaceticus/baumannii complex</taxon>
    </lineage>
</organism>
<comment type="function">
    <text evidence="1">May be involved in the transport of PQQ or its precursor to the periplasm.</text>
</comment>
<comment type="pathway">
    <text evidence="1">Cofactor biosynthesis; pyrroloquinoline quinone biosynthesis.</text>
</comment>
<comment type="similarity">
    <text evidence="1">Belongs to the PqqB family.</text>
</comment>
<reference key="1">
    <citation type="journal article" date="2008" name="Antimicrob. Agents Chemother.">
        <title>Whole-genome pyrosequencing of an epidemic multidrug-resistant Acinetobacter baumannii strain belonging to the European clone II group.</title>
        <authorList>
            <person name="Iacono M."/>
            <person name="Villa L."/>
            <person name="Fortini D."/>
            <person name="Bordoni R."/>
            <person name="Imperi F."/>
            <person name="Bonnal R.J."/>
            <person name="Sicheritz-Ponten T."/>
            <person name="De Bellis G."/>
            <person name="Visca P."/>
            <person name="Cassone A."/>
            <person name="Carattoli A."/>
        </authorList>
    </citation>
    <scope>NUCLEOTIDE SEQUENCE [LARGE SCALE GENOMIC DNA]</scope>
    <source>
        <strain>ACICU</strain>
    </source>
</reference>
<protein>
    <recommendedName>
        <fullName evidence="1">Coenzyme PQQ synthesis protein B</fullName>
    </recommendedName>
    <alternativeName>
        <fullName evidence="1">Pyrroloquinoline quinone biosynthesis protein B</fullName>
    </alternativeName>
</protein>
<feature type="chain" id="PRO_1000131157" description="Coenzyme PQQ synthesis protein B">
    <location>
        <begin position="1"/>
        <end position="303"/>
    </location>
</feature>
<gene>
    <name evidence="1" type="primary">pqqB</name>
    <name type="ordered locus">ACICU_01795</name>
</gene>
<evidence type="ECO:0000255" key="1">
    <source>
        <dbReference type="HAMAP-Rule" id="MF_00653"/>
    </source>
</evidence>
<accession>B2I0I2</accession>